<protein>
    <recommendedName>
        <fullName evidence="1">Ribonuclease Y</fullName>
        <shortName evidence="1">RNase Y</shortName>
        <ecNumber evidence="1">3.1.-.-</ecNumber>
    </recommendedName>
</protein>
<feature type="chain" id="PRO_0000344872" description="Ribonuclease Y">
    <location>
        <begin position="1"/>
        <end position="517"/>
    </location>
</feature>
<feature type="transmembrane region" description="Helical" evidence="1">
    <location>
        <begin position="4"/>
        <end position="24"/>
    </location>
</feature>
<feature type="domain" description="KH" evidence="1">
    <location>
        <begin position="207"/>
        <end position="267"/>
    </location>
</feature>
<feature type="domain" description="HD" evidence="2">
    <location>
        <begin position="333"/>
        <end position="426"/>
    </location>
</feature>
<reference key="1">
    <citation type="submission" date="2007-07" db="EMBL/GenBank/DDBJ databases">
        <title>Complete sequence of Fervidobacterium nodosum Rt17-B1.</title>
        <authorList>
            <consortium name="US DOE Joint Genome Institute"/>
            <person name="Copeland A."/>
            <person name="Lucas S."/>
            <person name="Lapidus A."/>
            <person name="Barry K."/>
            <person name="Glavina del Rio T."/>
            <person name="Dalin E."/>
            <person name="Tice H."/>
            <person name="Pitluck S."/>
            <person name="Saunders E."/>
            <person name="Brettin T."/>
            <person name="Bruce D."/>
            <person name="Detter J.C."/>
            <person name="Han C."/>
            <person name="Schmutz J."/>
            <person name="Larimer F."/>
            <person name="Land M."/>
            <person name="Hauser L."/>
            <person name="Kyrpides N."/>
            <person name="Mikhailova N."/>
            <person name="Nelson K."/>
            <person name="Gogarten J.P."/>
            <person name="Noll K."/>
            <person name="Richardson P."/>
        </authorList>
    </citation>
    <scope>NUCLEOTIDE SEQUENCE [LARGE SCALE GENOMIC DNA]</scope>
    <source>
        <strain>ATCC 35602 / DSM 5306 / Rt17-B1</strain>
    </source>
</reference>
<dbReference type="EC" id="3.1.-.-" evidence="1"/>
<dbReference type="EMBL" id="CP000771">
    <property type="protein sequence ID" value="ABS61140.1"/>
    <property type="molecule type" value="Genomic_DNA"/>
</dbReference>
<dbReference type="RefSeq" id="WP_011994449.1">
    <property type="nucleotide sequence ID" value="NC_009718.1"/>
</dbReference>
<dbReference type="SMR" id="A7HMK7"/>
<dbReference type="STRING" id="381764.Fnod_1293"/>
<dbReference type="KEGG" id="fno:Fnod_1293"/>
<dbReference type="eggNOG" id="COG1418">
    <property type="taxonomic scope" value="Bacteria"/>
</dbReference>
<dbReference type="HOGENOM" id="CLU_028328_1_0_0"/>
<dbReference type="OrthoDB" id="9803205at2"/>
<dbReference type="Proteomes" id="UP000002415">
    <property type="component" value="Chromosome"/>
</dbReference>
<dbReference type="GO" id="GO:0005886">
    <property type="term" value="C:plasma membrane"/>
    <property type="evidence" value="ECO:0007669"/>
    <property type="project" value="UniProtKB-SubCell"/>
</dbReference>
<dbReference type="GO" id="GO:0003723">
    <property type="term" value="F:RNA binding"/>
    <property type="evidence" value="ECO:0007669"/>
    <property type="project" value="UniProtKB-UniRule"/>
</dbReference>
<dbReference type="GO" id="GO:0004521">
    <property type="term" value="F:RNA endonuclease activity"/>
    <property type="evidence" value="ECO:0007669"/>
    <property type="project" value="UniProtKB-UniRule"/>
</dbReference>
<dbReference type="GO" id="GO:0006402">
    <property type="term" value="P:mRNA catabolic process"/>
    <property type="evidence" value="ECO:0007669"/>
    <property type="project" value="UniProtKB-UniRule"/>
</dbReference>
<dbReference type="CDD" id="cd00077">
    <property type="entry name" value="HDc"/>
    <property type="match status" value="1"/>
</dbReference>
<dbReference type="CDD" id="cd22431">
    <property type="entry name" value="KH-I_RNaseY"/>
    <property type="match status" value="1"/>
</dbReference>
<dbReference type="FunFam" id="1.10.3210.10:FF:000022">
    <property type="entry name" value="Ribonuclease Y"/>
    <property type="match status" value="1"/>
</dbReference>
<dbReference type="Gene3D" id="1.10.3210.10">
    <property type="entry name" value="Hypothetical protein af1432"/>
    <property type="match status" value="1"/>
</dbReference>
<dbReference type="Gene3D" id="3.30.1370.10">
    <property type="entry name" value="K Homology domain, type 1"/>
    <property type="match status" value="1"/>
</dbReference>
<dbReference type="HAMAP" id="MF_00335">
    <property type="entry name" value="RNase_Y"/>
    <property type="match status" value="1"/>
</dbReference>
<dbReference type="InterPro" id="IPR003607">
    <property type="entry name" value="HD/PDEase_dom"/>
</dbReference>
<dbReference type="InterPro" id="IPR006674">
    <property type="entry name" value="HD_domain"/>
</dbReference>
<dbReference type="InterPro" id="IPR006675">
    <property type="entry name" value="HDIG_dom"/>
</dbReference>
<dbReference type="InterPro" id="IPR004087">
    <property type="entry name" value="KH_dom"/>
</dbReference>
<dbReference type="InterPro" id="IPR004088">
    <property type="entry name" value="KH_dom_type_1"/>
</dbReference>
<dbReference type="InterPro" id="IPR036612">
    <property type="entry name" value="KH_dom_type_1_sf"/>
</dbReference>
<dbReference type="InterPro" id="IPR017705">
    <property type="entry name" value="Ribonuclease_Y"/>
</dbReference>
<dbReference type="InterPro" id="IPR022711">
    <property type="entry name" value="RNase_Y_N"/>
</dbReference>
<dbReference type="NCBIfam" id="TIGR00277">
    <property type="entry name" value="HDIG"/>
    <property type="match status" value="1"/>
</dbReference>
<dbReference type="NCBIfam" id="TIGR03319">
    <property type="entry name" value="RNase_Y"/>
    <property type="match status" value="1"/>
</dbReference>
<dbReference type="PANTHER" id="PTHR12826">
    <property type="entry name" value="RIBONUCLEASE Y"/>
    <property type="match status" value="1"/>
</dbReference>
<dbReference type="PANTHER" id="PTHR12826:SF15">
    <property type="entry name" value="RIBONUCLEASE Y"/>
    <property type="match status" value="1"/>
</dbReference>
<dbReference type="Pfam" id="PF01966">
    <property type="entry name" value="HD"/>
    <property type="match status" value="1"/>
</dbReference>
<dbReference type="Pfam" id="PF00013">
    <property type="entry name" value="KH_1"/>
    <property type="match status" value="1"/>
</dbReference>
<dbReference type="Pfam" id="PF12072">
    <property type="entry name" value="RNase_Y_N"/>
    <property type="match status" value="1"/>
</dbReference>
<dbReference type="SMART" id="SM00471">
    <property type="entry name" value="HDc"/>
    <property type="match status" value="1"/>
</dbReference>
<dbReference type="SMART" id="SM00322">
    <property type="entry name" value="KH"/>
    <property type="match status" value="1"/>
</dbReference>
<dbReference type="SUPFAM" id="SSF54791">
    <property type="entry name" value="Eukaryotic type KH-domain (KH-domain type I)"/>
    <property type="match status" value="1"/>
</dbReference>
<dbReference type="SUPFAM" id="SSF109604">
    <property type="entry name" value="HD-domain/PDEase-like"/>
    <property type="match status" value="1"/>
</dbReference>
<dbReference type="PROSITE" id="PS51831">
    <property type="entry name" value="HD"/>
    <property type="match status" value="1"/>
</dbReference>
<dbReference type="PROSITE" id="PS50084">
    <property type="entry name" value="KH_TYPE_1"/>
    <property type="match status" value="1"/>
</dbReference>
<proteinExistence type="inferred from homology"/>
<accession>A7HMK7</accession>
<organism>
    <name type="scientific">Fervidobacterium nodosum (strain ATCC 35602 / DSM 5306 / Rt17-B1)</name>
    <dbReference type="NCBI Taxonomy" id="381764"/>
    <lineage>
        <taxon>Bacteria</taxon>
        <taxon>Thermotogati</taxon>
        <taxon>Thermotogota</taxon>
        <taxon>Thermotogae</taxon>
        <taxon>Thermotogales</taxon>
        <taxon>Fervidobacteriaceae</taxon>
        <taxon>Fervidobacterium</taxon>
    </lineage>
</organism>
<keyword id="KW-1003">Cell membrane</keyword>
<keyword id="KW-0255">Endonuclease</keyword>
<keyword id="KW-0378">Hydrolase</keyword>
<keyword id="KW-0472">Membrane</keyword>
<keyword id="KW-0540">Nuclease</keyword>
<keyword id="KW-1185">Reference proteome</keyword>
<keyword id="KW-0694">RNA-binding</keyword>
<keyword id="KW-0812">Transmembrane</keyword>
<keyword id="KW-1133">Transmembrane helix</keyword>
<sequence length="517" mass="58829">MEWLIYIVILFVGIAAGAFFGISVGRKRAEEALEKKLKAAKEDAESIIKSAEKEASEIKKKAIIEAREEAHQIREEIEKERKKREEEIKQLEERLLKREEMLSKREELIDKRENYVENLKIELESKAKEIEEKAKEIERRFIELAGITHEQAREIVLQEAREKYEHEIAKFFVQIKTRYEDEADKYAKKIIADAIQRYAPEYIGEVTISTVALPNDDMKGRLIGREGRNIRTFEKITGVDLIIDDTPEMVTLSSFNPLRREVARRTIEKLVQDGRIHPARIEEMYEKAKAEVEREIKEAGQDAVITVGVGGLHPEIIKLLGRLKFRTSYGQNVLAHSVEVAQIAGLLAAELGLNVDKAKRGGLLHDIGKAIDHEVEGSHTDIGAEMLKRYGESDEIINMVMAHHGQEEPITPEAAIVAAADAISAARPGARREDVENYIKRLMKLEEIAKSYKYVENAYAIQAGREIRVIVQPDKTDDATIEKLAHDIATRIENELQYPGVLKVVVIREKRSVSYAK</sequence>
<comment type="function">
    <text evidence="1">Endoribonuclease that initiates mRNA decay.</text>
</comment>
<comment type="subcellular location">
    <subcellularLocation>
        <location evidence="1">Cell membrane</location>
        <topology evidence="1">Single-pass membrane protein</topology>
    </subcellularLocation>
</comment>
<comment type="similarity">
    <text evidence="1">Belongs to the RNase Y family.</text>
</comment>
<evidence type="ECO:0000255" key="1">
    <source>
        <dbReference type="HAMAP-Rule" id="MF_00335"/>
    </source>
</evidence>
<evidence type="ECO:0000255" key="2">
    <source>
        <dbReference type="PROSITE-ProRule" id="PRU01175"/>
    </source>
</evidence>
<name>RNY_FERNB</name>
<gene>
    <name evidence="1" type="primary">rny</name>
    <name type="ordered locus">Fnod_1293</name>
</gene>